<reference key="1">
    <citation type="journal article" date="2001" name="DNA Res.">
        <title>Prediction of the coding sequences of unidentified human genes. XX. The complete sequences of 100 new cDNA clones from brain which code for large proteins in vitro.</title>
        <authorList>
            <person name="Nagase T."/>
            <person name="Nakayama M."/>
            <person name="Nakajima D."/>
            <person name="Kikuno R."/>
            <person name="Ohara O."/>
        </authorList>
    </citation>
    <scope>NUCLEOTIDE SEQUENCE [LARGE SCALE MRNA] (ISOFORM 1)</scope>
    <scope>VARIANT GLU-1049</scope>
    <source>
        <tissue>Brain</tissue>
    </source>
</reference>
<reference key="2">
    <citation type="journal article" date="2004" name="Nat. Genet.">
        <title>Complete sequencing and characterization of 21,243 full-length human cDNAs.</title>
        <authorList>
            <person name="Ota T."/>
            <person name="Suzuki Y."/>
            <person name="Nishikawa T."/>
            <person name="Otsuki T."/>
            <person name="Sugiyama T."/>
            <person name="Irie R."/>
            <person name="Wakamatsu A."/>
            <person name="Hayashi K."/>
            <person name="Sato H."/>
            <person name="Nagai K."/>
            <person name="Kimura K."/>
            <person name="Makita H."/>
            <person name="Sekine M."/>
            <person name="Obayashi M."/>
            <person name="Nishi T."/>
            <person name="Shibahara T."/>
            <person name="Tanaka T."/>
            <person name="Ishii S."/>
            <person name="Yamamoto J."/>
            <person name="Saito K."/>
            <person name="Kawai Y."/>
            <person name="Isono Y."/>
            <person name="Nakamura Y."/>
            <person name="Nagahari K."/>
            <person name="Murakami K."/>
            <person name="Yasuda T."/>
            <person name="Iwayanagi T."/>
            <person name="Wagatsuma M."/>
            <person name="Shiratori A."/>
            <person name="Sudo H."/>
            <person name="Hosoiri T."/>
            <person name="Kaku Y."/>
            <person name="Kodaira H."/>
            <person name="Kondo H."/>
            <person name="Sugawara M."/>
            <person name="Takahashi M."/>
            <person name="Kanda K."/>
            <person name="Yokoi T."/>
            <person name="Furuya T."/>
            <person name="Kikkawa E."/>
            <person name="Omura Y."/>
            <person name="Abe K."/>
            <person name="Kamihara K."/>
            <person name="Katsuta N."/>
            <person name="Sato K."/>
            <person name="Tanikawa M."/>
            <person name="Yamazaki M."/>
            <person name="Ninomiya K."/>
            <person name="Ishibashi T."/>
            <person name="Yamashita H."/>
            <person name="Murakawa K."/>
            <person name="Fujimori K."/>
            <person name="Tanai H."/>
            <person name="Kimata M."/>
            <person name="Watanabe M."/>
            <person name="Hiraoka S."/>
            <person name="Chiba Y."/>
            <person name="Ishida S."/>
            <person name="Ono Y."/>
            <person name="Takiguchi S."/>
            <person name="Watanabe S."/>
            <person name="Yosida M."/>
            <person name="Hotuta T."/>
            <person name="Kusano J."/>
            <person name="Kanehori K."/>
            <person name="Takahashi-Fujii A."/>
            <person name="Hara H."/>
            <person name="Tanase T.-O."/>
            <person name="Nomura Y."/>
            <person name="Togiya S."/>
            <person name="Komai F."/>
            <person name="Hara R."/>
            <person name="Takeuchi K."/>
            <person name="Arita M."/>
            <person name="Imose N."/>
            <person name="Musashino K."/>
            <person name="Yuuki H."/>
            <person name="Oshima A."/>
            <person name="Sasaki N."/>
            <person name="Aotsuka S."/>
            <person name="Yoshikawa Y."/>
            <person name="Matsunawa H."/>
            <person name="Ichihara T."/>
            <person name="Shiohata N."/>
            <person name="Sano S."/>
            <person name="Moriya S."/>
            <person name="Momiyama H."/>
            <person name="Satoh N."/>
            <person name="Takami S."/>
            <person name="Terashima Y."/>
            <person name="Suzuki O."/>
            <person name="Nakagawa S."/>
            <person name="Senoh A."/>
            <person name="Mizoguchi H."/>
            <person name="Goto Y."/>
            <person name="Shimizu F."/>
            <person name="Wakebe H."/>
            <person name="Hishigaki H."/>
            <person name="Watanabe T."/>
            <person name="Sugiyama A."/>
            <person name="Takemoto M."/>
            <person name="Kawakami B."/>
            <person name="Yamazaki M."/>
            <person name="Watanabe K."/>
            <person name="Kumagai A."/>
            <person name="Itakura S."/>
            <person name="Fukuzumi Y."/>
            <person name="Fujimori Y."/>
            <person name="Komiyama M."/>
            <person name="Tashiro H."/>
            <person name="Tanigami A."/>
            <person name="Fujiwara T."/>
            <person name="Ono T."/>
            <person name="Yamada K."/>
            <person name="Fujii Y."/>
            <person name="Ozaki K."/>
            <person name="Hirao M."/>
            <person name="Ohmori Y."/>
            <person name="Kawabata A."/>
            <person name="Hikiji T."/>
            <person name="Kobatake N."/>
            <person name="Inagaki H."/>
            <person name="Ikema Y."/>
            <person name="Okamoto S."/>
            <person name="Okitani R."/>
            <person name="Kawakami T."/>
            <person name="Noguchi S."/>
            <person name="Itoh T."/>
            <person name="Shigeta K."/>
            <person name="Senba T."/>
            <person name="Matsumura K."/>
            <person name="Nakajima Y."/>
            <person name="Mizuno T."/>
            <person name="Morinaga M."/>
            <person name="Sasaki M."/>
            <person name="Togashi T."/>
            <person name="Oyama M."/>
            <person name="Hata H."/>
            <person name="Watanabe M."/>
            <person name="Komatsu T."/>
            <person name="Mizushima-Sugano J."/>
            <person name="Satoh T."/>
            <person name="Shirai Y."/>
            <person name="Takahashi Y."/>
            <person name="Nakagawa K."/>
            <person name="Okumura K."/>
            <person name="Nagase T."/>
            <person name="Nomura N."/>
            <person name="Kikuchi H."/>
            <person name="Masuho Y."/>
            <person name="Yamashita R."/>
            <person name="Nakai K."/>
            <person name="Yada T."/>
            <person name="Nakamura Y."/>
            <person name="Ohara O."/>
            <person name="Isogai T."/>
            <person name="Sugano S."/>
        </authorList>
    </citation>
    <scope>NUCLEOTIDE SEQUENCE [LARGE SCALE MRNA] (ISOFORM 3)</scope>
    <scope>NUCLEOTIDE SEQUENCE [LARGE SCALE MRNA] OF 410-1154 (ISOFORM 2)</scope>
    <source>
        <tissue>Cerebellum</tissue>
        <tissue>Placenta</tissue>
    </source>
</reference>
<reference key="3">
    <citation type="journal article" date="2003" name="Nature">
        <title>The DNA sequence of human chromosome 7.</title>
        <authorList>
            <person name="Hillier L.W."/>
            <person name="Fulton R.S."/>
            <person name="Fulton L.A."/>
            <person name="Graves T.A."/>
            <person name="Pepin K.H."/>
            <person name="Wagner-McPherson C."/>
            <person name="Layman D."/>
            <person name="Maas J."/>
            <person name="Jaeger S."/>
            <person name="Walker R."/>
            <person name="Wylie K."/>
            <person name="Sekhon M."/>
            <person name="Becker M.C."/>
            <person name="O'Laughlin M.D."/>
            <person name="Schaller M.E."/>
            <person name="Fewell G.A."/>
            <person name="Delehaunty K.D."/>
            <person name="Miner T.L."/>
            <person name="Nash W.E."/>
            <person name="Cordes M."/>
            <person name="Du H."/>
            <person name="Sun H."/>
            <person name="Edwards J."/>
            <person name="Bradshaw-Cordum H."/>
            <person name="Ali J."/>
            <person name="Andrews S."/>
            <person name="Isak A."/>
            <person name="Vanbrunt A."/>
            <person name="Nguyen C."/>
            <person name="Du F."/>
            <person name="Lamar B."/>
            <person name="Courtney L."/>
            <person name="Kalicki J."/>
            <person name="Ozersky P."/>
            <person name="Bielicki L."/>
            <person name="Scott K."/>
            <person name="Holmes A."/>
            <person name="Harkins R."/>
            <person name="Harris A."/>
            <person name="Strong C.M."/>
            <person name="Hou S."/>
            <person name="Tomlinson C."/>
            <person name="Dauphin-Kohlberg S."/>
            <person name="Kozlowicz-Reilly A."/>
            <person name="Leonard S."/>
            <person name="Rohlfing T."/>
            <person name="Rock S.M."/>
            <person name="Tin-Wollam A.-M."/>
            <person name="Abbott A."/>
            <person name="Minx P."/>
            <person name="Maupin R."/>
            <person name="Strowmatt C."/>
            <person name="Latreille P."/>
            <person name="Miller N."/>
            <person name="Johnson D."/>
            <person name="Murray J."/>
            <person name="Woessner J.P."/>
            <person name="Wendl M.C."/>
            <person name="Yang S.-P."/>
            <person name="Schultz B.R."/>
            <person name="Wallis J.W."/>
            <person name="Spieth J."/>
            <person name="Bieri T.A."/>
            <person name="Nelson J.O."/>
            <person name="Berkowicz N."/>
            <person name="Wohldmann P.E."/>
            <person name="Cook L.L."/>
            <person name="Hickenbotham M.T."/>
            <person name="Eldred J."/>
            <person name="Williams D."/>
            <person name="Bedell J.A."/>
            <person name="Mardis E.R."/>
            <person name="Clifton S.W."/>
            <person name="Chissoe S.L."/>
            <person name="Marra M.A."/>
            <person name="Raymond C."/>
            <person name="Haugen E."/>
            <person name="Gillett W."/>
            <person name="Zhou Y."/>
            <person name="James R."/>
            <person name="Phelps K."/>
            <person name="Iadanoto S."/>
            <person name="Bubb K."/>
            <person name="Simms E."/>
            <person name="Levy R."/>
            <person name="Clendenning J."/>
            <person name="Kaul R."/>
            <person name="Kent W.J."/>
            <person name="Furey T.S."/>
            <person name="Baertsch R.A."/>
            <person name="Brent M.R."/>
            <person name="Keibler E."/>
            <person name="Flicek P."/>
            <person name="Bork P."/>
            <person name="Suyama M."/>
            <person name="Bailey J.A."/>
            <person name="Portnoy M.E."/>
            <person name="Torrents D."/>
            <person name="Chinwalla A.T."/>
            <person name="Gish W.R."/>
            <person name="Eddy S.R."/>
            <person name="McPherson J.D."/>
            <person name="Olson M.V."/>
            <person name="Eichler E.E."/>
            <person name="Green E.D."/>
            <person name="Waterston R.H."/>
            <person name="Wilson R.K."/>
        </authorList>
    </citation>
    <scope>NUCLEOTIDE SEQUENCE [LARGE SCALE GENOMIC DNA]</scope>
</reference>
<reference key="4">
    <citation type="journal article" date="2003" name="Science">
        <title>Human chromosome 7: DNA sequence and biology.</title>
        <authorList>
            <person name="Scherer S.W."/>
            <person name="Cheung J."/>
            <person name="MacDonald J.R."/>
            <person name="Osborne L.R."/>
            <person name="Nakabayashi K."/>
            <person name="Herbrick J.-A."/>
            <person name="Carson A.R."/>
            <person name="Parker-Katiraee L."/>
            <person name="Skaug J."/>
            <person name="Khaja R."/>
            <person name="Zhang J."/>
            <person name="Hudek A.K."/>
            <person name="Li M."/>
            <person name="Haddad M."/>
            <person name="Duggan G.E."/>
            <person name="Fernandez B.A."/>
            <person name="Kanematsu E."/>
            <person name="Gentles S."/>
            <person name="Christopoulos C.C."/>
            <person name="Choufani S."/>
            <person name="Kwasnicka D."/>
            <person name="Zheng X.H."/>
            <person name="Lai Z."/>
            <person name="Nusskern D.R."/>
            <person name="Zhang Q."/>
            <person name="Gu Z."/>
            <person name="Lu F."/>
            <person name="Zeesman S."/>
            <person name="Nowaczyk M.J."/>
            <person name="Teshima I."/>
            <person name="Chitayat D."/>
            <person name="Shuman C."/>
            <person name="Weksberg R."/>
            <person name="Zackai E.H."/>
            <person name="Grebe T.A."/>
            <person name="Cox S.R."/>
            <person name="Kirkpatrick S.J."/>
            <person name="Rahman N."/>
            <person name="Friedman J.M."/>
            <person name="Heng H.H.Q."/>
            <person name="Pelicci P.G."/>
            <person name="Lo-Coco F."/>
            <person name="Belloni E."/>
            <person name="Shaffer L.G."/>
            <person name="Pober B."/>
            <person name="Morton C.C."/>
            <person name="Gusella J.F."/>
            <person name="Bruns G.A.P."/>
            <person name="Korf B.R."/>
            <person name="Quade B.J."/>
            <person name="Ligon A.H."/>
            <person name="Ferguson H."/>
            <person name="Higgins A.W."/>
            <person name="Leach N.T."/>
            <person name="Herrick S.R."/>
            <person name="Lemyre E."/>
            <person name="Farra C.G."/>
            <person name="Kim H.-G."/>
            <person name="Summers A.M."/>
            <person name="Gripp K.W."/>
            <person name="Roberts W."/>
            <person name="Szatmari P."/>
            <person name="Winsor E.J.T."/>
            <person name="Grzeschik K.-H."/>
            <person name="Teebi A."/>
            <person name="Minassian B.A."/>
            <person name="Kere J."/>
            <person name="Armengol L."/>
            <person name="Pujana M.A."/>
            <person name="Estivill X."/>
            <person name="Wilson M.D."/>
            <person name="Koop B.F."/>
            <person name="Tosi S."/>
            <person name="Moore G.E."/>
            <person name="Boright A.P."/>
            <person name="Zlotorynski E."/>
            <person name="Kerem B."/>
            <person name="Kroisel P.M."/>
            <person name="Petek E."/>
            <person name="Oscier D.G."/>
            <person name="Mould S.J."/>
            <person name="Doehner H."/>
            <person name="Doehner K."/>
            <person name="Rommens J.M."/>
            <person name="Vincent J.B."/>
            <person name="Venter J.C."/>
            <person name="Li P.W."/>
            <person name="Mural R.J."/>
            <person name="Adams M.D."/>
            <person name="Tsui L.-C."/>
        </authorList>
    </citation>
    <scope>NUCLEOTIDE SEQUENCE [LARGE SCALE GENOMIC DNA]</scope>
    <scope>VARIANT GLU-1049</scope>
</reference>
<reference key="5">
    <citation type="submission" date="2006-12" db="EMBL/GenBank/DDBJ databases">
        <authorList>
            <person name="Mural R.J."/>
            <person name="Istrail S."/>
            <person name="Sutton G.G."/>
            <person name="Florea L."/>
            <person name="Halpern A.L."/>
            <person name="Mobarry C.M."/>
            <person name="Lippert R."/>
            <person name="Walenz B."/>
            <person name="Shatkay H."/>
            <person name="Dew I."/>
            <person name="Miller J.R."/>
            <person name="Flanigan M.J."/>
            <person name="Edwards N.J."/>
            <person name="Bolanos R."/>
            <person name="Fasulo D."/>
            <person name="Halldorsson B.V."/>
            <person name="Hannenhalli S."/>
            <person name="Turner R."/>
            <person name="Yooseph S."/>
            <person name="Lu F."/>
            <person name="Nusskern D.R."/>
            <person name="Shue B.C."/>
            <person name="Zheng X.H."/>
            <person name="Zhong F."/>
            <person name="Delcher A.L."/>
            <person name="Huson D.H."/>
            <person name="Kravitz S.A."/>
            <person name="Mouchard L."/>
            <person name="Reinert K."/>
            <person name="Remington K.A."/>
            <person name="Clark A.G."/>
            <person name="Waterman M.S."/>
            <person name="Eichler E.E."/>
            <person name="Adams M.D."/>
            <person name="Hunkapiller M.W."/>
            <person name="Myers E.W."/>
            <person name="Venter J.C."/>
        </authorList>
    </citation>
    <scope>NUCLEOTIDE SEQUENCE [LARGE SCALE GENOMIC DNA]</scope>
    <scope>VARIANT GLU-1049</scope>
</reference>
<reference key="6">
    <citation type="journal article" date="2004" name="Genome Res.">
        <title>The status, quality, and expansion of the NIH full-length cDNA project: the Mammalian Gene Collection (MGC).</title>
        <authorList>
            <consortium name="The MGC Project Team"/>
        </authorList>
    </citation>
    <scope>NUCLEOTIDE SEQUENCE [LARGE SCALE MRNA] (ISOFORM 1)</scope>
    <scope>VARIANT GLU-1049</scope>
    <source>
        <tissue>Brain</tissue>
    </source>
</reference>
<reference key="7">
    <citation type="journal article" date="2007" name="BMC Genomics">
        <title>The full-ORF clone resource of the German cDNA consortium.</title>
        <authorList>
            <person name="Bechtel S."/>
            <person name="Rosenfelder H."/>
            <person name="Duda A."/>
            <person name="Schmidt C.P."/>
            <person name="Ernst U."/>
            <person name="Wellenreuther R."/>
            <person name="Mehrle A."/>
            <person name="Schuster C."/>
            <person name="Bahr A."/>
            <person name="Bloecker H."/>
            <person name="Heubner D."/>
            <person name="Hoerlein A."/>
            <person name="Michel G."/>
            <person name="Wedler H."/>
            <person name="Koehrer K."/>
            <person name="Ottenwaelder B."/>
            <person name="Poustka A."/>
            <person name="Wiemann S."/>
            <person name="Schupp I."/>
        </authorList>
    </citation>
    <scope>NUCLEOTIDE SEQUENCE [LARGE SCALE MRNA] OF 125-1154 (ISOFORM 4)</scope>
    <scope>VARIANT GLU-1049</scope>
    <source>
        <tissue>Testis</tissue>
    </source>
</reference>
<reference key="8">
    <citation type="journal article" date="2004" name="World J. Gastroenterol.">
        <title>Expression of tumor related gene NAG6 in gastric cancer and restriction fragment length polymorphism analysis.</title>
        <authorList>
            <person name="Zhang X.-M."/>
            <person name="Sheng S.-R."/>
            <person name="Wang X.-Y."/>
            <person name="Bin L.-H."/>
            <person name="Wang J.-R."/>
            <person name="Li G.-Y."/>
        </authorList>
    </citation>
    <scope>NUCLEOTIDE SEQUENCE [MRNA] OF 1128-1154 (ISOFORM 4)</scope>
    <scope>TISSUE SPECIFICITY</scope>
    <source>
        <tissue>Nasopharyngeal carcinoma</tissue>
    </source>
</reference>
<reference key="9">
    <citation type="journal article" date="2013" name="J. Proteome Res.">
        <title>Toward a comprehensive characterization of a human cancer cell phosphoproteome.</title>
        <authorList>
            <person name="Zhou H."/>
            <person name="Di Palma S."/>
            <person name="Preisinger C."/>
            <person name="Peng M."/>
            <person name="Polat A.N."/>
            <person name="Heck A.J."/>
            <person name="Mohammed S."/>
        </authorList>
    </citation>
    <scope>PHOSPHORYLATION [LARGE SCALE ANALYSIS] AT SER-52</scope>
    <scope>IDENTIFICATION BY MASS SPECTROMETRY [LARGE SCALE ANALYSIS]</scope>
    <source>
        <tissue>Erythroleukemia</tissue>
    </source>
</reference>
<proteinExistence type="evidence at protein level"/>
<protein>
    <recommendedName>
        <fullName>Coiled-coil domain-containing protein 136</fullName>
    </recommendedName>
    <alternativeName>
        <fullName>Nasopharyngeal carcinoma-associated gene 6 protein</fullName>
    </alternativeName>
</protein>
<gene>
    <name type="primary">CCDC136</name>
    <name type="synonym">KIAA1793</name>
    <name type="ORF">NAG6</name>
</gene>
<dbReference type="EMBL" id="AB058696">
    <property type="protein sequence ID" value="BAB47422.1"/>
    <property type="status" value="ALT_INIT"/>
    <property type="molecule type" value="mRNA"/>
</dbReference>
<dbReference type="EMBL" id="AK023500">
    <property type="protein sequence ID" value="BAB14590.1"/>
    <property type="status" value="ALT_INIT"/>
    <property type="molecule type" value="mRNA"/>
</dbReference>
<dbReference type="EMBL" id="AK124447">
    <property type="protein sequence ID" value="BAC85854.1"/>
    <property type="molecule type" value="mRNA"/>
</dbReference>
<dbReference type="EMBL" id="AC024952">
    <property type="status" value="NOT_ANNOTATED_CDS"/>
    <property type="molecule type" value="Genomic_DNA"/>
</dbReference>
<dbReference type="EMBL" id="AC025594">
    <property type="status" value="NOT_ANNOTATED_CDS"/>
    <property type="molecule type" value="Genomic_DNA"/>
</dbReference>
<dbReference type="EMBL" id="CH236950">
    <property type="protein sequence ID" value="EAL24111.1"/>
    <property type="molecule type" value="Genomic_DNA"/>
</dbReference>
<dbReference type="EMBL" id="CH471070">
    <property type="protein sequence ID" value="EAW83682.1"/>
    <property type="molecule type" value="Genomic_DNA"/>
</dbReference>
<dbReference type="EMBL" id="CH471070">
    <property type="protein sequence ID" value="EAW83684.1"/>
    <property type="molecule type" value="Genomic_DNA"/>
</dbReference>
<dbReference type="EMBL" id="BC150331">
    <property type="protein sequence ID" value="AAI50332.1"/>
    <property type="molecule type" value="mRNA"/>
</dbReference>
<dbReference type="EMBL" id="BC152408">
    <property type="protein sequence ID" value="AAI52409.1"/>
    <property type="molecule type" value="mRNA"/>
</dbReference>
<dbReference type="EMBL" id="AL133027">
    <property type="protein sequence ID" value="CAB61359.1"/>
    <property type="molecule type" value="mRNA"/>
</dbReference>
<dbReference type="EMBL" id="AF156971">
    <property type="status" value="NOT_ANNOTATED_CDS"/>
    <property type="molecule type" value="mRNA"/>
</dbReference>
<dbReference type="CCDS" id="CCDS47704.1">
    <molecule id="Q96JN2-1"/>
</dbReference>
<dbReference type="CCDS" id="CCDS56510.1">
    <molecule id="Q96JN2-3"/>
</dbReference>
<dbReference type="PIR" id="T42701">
    <property type="entry name" value="T42701"/>
</dbReference>
<dbReference type="RefSeq" id="NP_001188301.1">
    <molecule id="Q96JN2-3"/>
    <property type="nucleotide sequence ID" value="NM_001201372.2"/>
</dbReference>
<dbReference type="RefSeq" id="NP_073579.4">
    <molecule id="Q96JN2-1"/>
    <property type="nucleotide sequence ID" value="NM_022742.4"/>
</dbReference>
<dbReference type="RefSeq" id="XP_016868022.1">
    <property type="nucleotide sequence ID" value="XM_017012533.1"/>
</dbReference>
<dbReference type="SMR" id="Q96JN2"/>
<dbReference type="BioGRID" id="122267">
    <property type="interactions" value="168"/>
</dbReference>
<dbReference type="FunCoup" id="Q96JN2">
    <property type="interactions" value="117"/>
</dbReference>
<dbReference type="IntAct" id="Q96JN2">
    <property type="interactions" value="90"/>
</dbReference>
<dbReference type="MINT" id="Q96JN2"/>
<dbReference type="STRING" id="9606.ENSP00000297788"/>
<dbReference type="iPTMnet" id="Q96JN2"/>
<dbReference type="PhosphoSitePlus" id="Q96JN2"/>
<dbReference type="BioMuta" id="CCDC136"/>
<dbReference type="DMDM" id="296439415"/>
<dbReference type="jPOST" id="Q96JN2"/>
<dbReference type="MassIVE" id="Q96JN2"/>
<dbReference type="PaxDb" id="9606-ENSP00000297788"/>
<dbReference type="PeptideAtlas" id="Q96JN2"/>
<dbReference type="ProteomicsDB" id="76991">
    <molecule id="Q96JN2-1"/>
</dbReference>
<dbReference type="ProteomicsDB" id="76992">
    <molecule id="Q96JN2-2"/>
</dbReference>
<dbReference type="ProteomicsDB" id="76993">
    <molecule id="Q96JN2-3"/>
</dbReference>
<dbReference type="ProteomicsDB" id="76994">
    <molecule id="Q96JN2-4"/>
</dbReference>
<dbReference type="Antibodypedia" id="2414">
    <property type="antibodies" value="41 antibodies from 9 providers"/>
</dbReference>
<dbReference type="DNASU" id="64753"/>
<dbReference type="Ensembl" id="ENST00000297788.9">
    <molecule id="Q96JN2-1"/>
    <property type="protein sequence ID" value="ENSP00000297788.4"/>
    <property type="gene ID" value="ENSG00000128596.17"/>
</dbReference>
<dbReference type="Ensembl" id="ENST00000378685.8">
    <molecule id="Q96JN2-3"/>
    <property type="protein sequence ID" value="ENSP00000367956.4"/>
    <property type="gene ID" value="ENSG00000128596.17"/>
</dbReference>
<dbReference type="GeneID" id="64753"/>
<dbReference type="KEGG" id="hsa:64753"/>
<dbReference type="MANE-Select" id="ENST00000297788.9">
    <property type="protein sequence ID" value="ENSP00000297788.4"/>
    <property type="RefSeq nucleotide sequence ID" value="NM_022742.5"/>
    <property type="RefSeq protein sequence ID" value="NP_073579.5"/>
</dbReference>
<dbReference type="UCSC" id="uc003vnu.3">
    <molecule id="Q96JN2-1"/>
    <property type="organism name" value="human"/>
</dbReference>
<dbReference type="AGR" id="HGNC:22225"/>
<dbReference type="CTD" id="64753"/>
<dbReference type="DisGeNET" id="64753"/>
<dbReference type="GeneCards" id="CCDC136"/>
<dbReference type="HGNC" id="HGNC:22225">
    <property type="gene designation" value="CCDC136"/>
</dbReference>
<dbReference type="HPA" id="ENSG00000128596">
    <property type="expression patterns" value="Group enriched (brain, retina, testis)"/>
</dbReference>
<dbReference type="MIM" id="611902">
    <property type="type" value="gene"/>
</dbReference>
<dbReference type="neXtProt" id="NX_Q96JN2"/>
<dbReference type="OpenTargets" id="ENSG00000128596"/>
<dbReference type="PharmGKB" id="PA162381381"/>
<dbReference type="VEuPathDB" id="HostDB:ENSG00000128596"/>
<dbReference type="eggNOG" id="ENOG502RZUE">
    <property type="taxonomic scope" value="Eukaryota"/>
</dbReference>
<dbReference type="GeneTree" id="ENSGT00940000159122"/>
<dbReference type="HOGENOM" id="CLU_007247_0_0_1"/>
<dbReference type="InParanoid" id="Q96JN2"/>
<dbReference type="OMA" id="AMEXELR"/>
<dbReference type="OrthoDB" id="9948923at2759"/>
<dbReference type="PAN-GO" id="Q96JN2">
    <property type="GO annotations" value="3 GO annotations based on evolutionary models"/>
</dbReference>
<dbReference type="PhylomeDB" id="Q96JN2"/>
<dbReference type="TreeFam" id="TF350490"/>
<dbReference type="PathwayCommons" id="Q96JN2"/>
<dbReference type="SignaLink" id="Q96JN2"/>
<dbReference type="BioGRID-ORCS" id="64753">
    <property type="hits" value="17 hits in 1159 CRISPR screens"/>
</dbReference>
<dbReference type="ChiTaRS" id="CCDC136">
    <property type="organism name" value="human"/>
</dbReference>
<dbReference type="GenomeRNAi" id="64753"/>
<dbReference type="Pharos" id="Q96JN2">
    <property type="development level" value="Tbio"/>
</dbReference>
<dbReference type="PRO" id="PR:Q96JN2"/>
<dbReference type="Proteomes" id="UP000005640">
    <property type="component" value="Chromosome 7"/>
</dbReference>
<dbReference type="RNAct" id="Q96JN2">
    <property type="molecule type" value="protein"/>
</dbReference>
<dbReference type="Bgee" id="ENSG00000128596">
    <property type="expression patterns" value="Expressed in sperm and 149 other cell types or tissues"/>
</dbReference>
<dbReference type="ExpressionAtlas" id="Q96JN2">
    <property type="expression patterns" value="baseline and differential"/>
</dbReference>
<dbReference type="GO" id="GO:0002080">
    <property type="term" value="C:acrosomal membrane"/>
    <property type="evidence" value="ECO:0000250"/>
    <property type="project" value="UniProtKB"/>
</dbReference>
<dbReference type="GO" id="GO:0001675">
    <property type="term" value="P:acrosome assembly"/>
    <property type="evidence" value="ECO:0000250"/>
    <property type="project" value="UniProtKB"/>
</dbReference>
<dbReference type="GO" id="GO:0007338">
    <property type="term" value="P:single fertilization"/>
    <property type="evidence" value="ECO:0000250"/>
    <property type="project" value="UniProtKB"/>
</dbReference>
<dbReference type="GO" id="GO:0007283">
    <property type="term" value="P:spermatogenesis"/>
    <property type="evidence" value="ECO:0000250"/>
    <property type="project" value="UniProtKB"/>
</dbReference>
<dbReference type="Gene3D" id="1.10.287.1490">
    <property type="match status" value="1"/>
</dbReference>
<dbReference type="InterPro" id="IPR051176">
    <property type="entry name" value="Cent_Immune-Sig_Mod"/>
</dbReference>
<dbReference type="PANTHER" id="PTHR15715">
    <property type="entry name" value="CENTROSOMAL PROTEIN OF 170 KDA"/>
    <property type="match status" value="1"/>
</dbReference>
<dbReference type="PANTHER" id="PTHR15715:SF26">
    <property type="entry name" value="COILED-COIL DOMAIN-CONTAINING PROTEIN 136"/>
    <property type="match status" value="1"/>
</dbReference>
<name>CC136_HUMAN</name>
<sequence length="1154" mass="134045">MQAMEGEVLLPALYEEEEEEEEEEEEVEEEEEQVQKGGSVGSLSVNKHRGLSLTETELEELRAQVLQLVAELEETRELAGQHEDDSLELQGLLEDERLASAQQAEVFTKQIQQLQGELRSLREEISLLEHEKESELKEIEQELHLAQAEIQSLRQAAEDSATEHESDIASLQEDLCRMQNELEDMERIRGDYEMEIASLRAEMEMKSSEPSGSLGLSDYSGLQEELQELRERYHFLNEEYRALQESNSSLTGQLADLESERTQRATERWLQSQTLSMTSAESQTSEMDFLEPDPEMQLLRQQLRDAEEQMHGMKNKCQELCCELEELQHHRQVSEEEQRRLQRELKCAQNEVLRFQTSHSVTQNEELKSRLCTLQKKYDTSQDEQNELLKMQLQLQTELRQLKVMKSTLVENQSEKELLCRLQKLHLQHQNVTCEKEKLLERQQQLQEELQCHEAELQHLRDTVASFKESNEKDTETHAQLQEMKQLYQASKDELERQKHMYDQLEQDLLLCQLELKELKASHPIPEDKGKCANKCDTLLSRLTELQEKYKASQKEMGQLQMEQCELLEDQRRMQEEQGQLQEELHRLTLPLPKSGLLLKSQELLTKLEDLCELQLLYQGMQEEQKKLIQNQDCVLKEQLEIHEELRRFKESHFQEVLENPDDSKLAKSSKCNRNKQSKLLMEQMQALQVMYDAGQAKQELLQQEQGRLLEERKRLQADLQLCLEEMQLLQVQSPSIKMSLESYGKSYGSMVPSNENCRKTYDTTVDDNESYYKSYTSTQTSSKSFLKSYDSSTSASEAYGKSYCTTSNSSITYKKSYGSTSSSDTCQKSFVSSCTDEEPAEPEDMERFEEMVVKVLIKLQAVQAMYQISQEEHSQLQEQMEKLLAKQKDLKEELDACEREFKECMECLEKPMAPQNDKNEIKELQTKLRELQLQYQASMDEQGRLLVVQEQLEGQLQCCQEELRQLREKRPSVVKEARGKNANKNMNKNANGVKMKKVTKPCSDTSESDLETRKSLEVVLYYKASQRKLDGLAKEEEKKEEMEEEKKQVKEEAKEQCGDELVAEPADPEEAKSTEDQEENEEDKEEEEKEEDSEEEEDDADSSLESPEENNPLRLSESKKSSPTPNPPIFSLPLVGLVVISALLWCWWAETSS</sequence>
<evidence type="ECO:0000250" key="1">
    <source>
        <dbReference type="UniProtKB" id="Q3TVA9"/>
    </source>
</evidence>
<evidence type="ECO:0000255" key="2"/>
<evidence type="ECO:0000256" key="3">
    <source>
        <dbReference type="SAM" id="MobiDB-lite"/>
    </source>
</evidence>
<evidence type="ECO:0000269" key="4">
    <source>
    </source>
</evidence>
<evidence type="ECO:0000269" key="5">
    <source>
    </source>
</evidence>
<evidence type="ECO:0000269" key="6">
    <source>
    </source>
</evidence>
<evidence type="ECO:0000269" key="7">
    <source>
    </source>
</evidence>
<evidence type="ECO:0000269" key="8">
    <source>
    </source>
</evidence>
<evidence type="ECO:0000269" key="9">
    <source ref="5"/>
</evidence>
<evidence type="ECO:0000303" key="10">
    <source>
    </source>
</evidence>
<evidence type="ECO:0000303" key="11">
    <source>
    </source>
</evidence>
<evidence type="ECO:0000303" key="12">
    <source>
    </source>
</evidence>
<evidence type="ECO:0000305" key="13"/>
<evidence type="ECO:0007744" key="14">
    <source>
    </source>
</evidence>
<accession>Q96JN2</accession>
<accession>A4D1K1</accession>
<accession>A7MCY7</accession>
<accession>A8MYA7</accession>
<accession>Q6ZVK7</accession>
<accession>Q9H8M3</accession>
<accession>Q9UFE1</accession>
<feature type="chain" id="PRO_0000300639" description="Coiled-coil domain-containing protein 136">
    <location>
        <begin position="1"/>
        <end position="1154"/>
    </location>
</feature>
<feature type="transmembrane region" description="Helical" evidence="2">
    <location>
        <begin position="1130"/>
        <end position="1150"/>
    </location>
</feature>
<feature type="region of interest" description="Disordered" evidence="3">
    <location>
        <begin position="1"/>
        <end position="48"/>
    </location>
</feature>
<feature type="region of interest" description="Disordered" evidence="3">
    <location>
        <begin position="1031"/>
        <end position="1131"/>
    </location>
</feature>
<feature type="coiled-coil region" evidence="2">
    <location>
        <begin position="696"/>
        <end position="733"/>
    </location>
</feature>
<feature type="coiled-coil region" evidence="2">
    <location>
        <begin position="859"/>
        <end position="974"/>
    </location>
</feature>
<feature type="compositionally biased region" description="Acidic residues" evidence="3">
    <location>
        <begin position="14"/>
        <end position="32"/>
    </location>
</feature>
<feature type="compositionally biased region" description="Basic and acidic residues" evidence="3">
    <location>
        <begin position="1031"/>
        <end position="1058"/>
    </location>
</feature>
<feature type="compositionally biased region" description="Acidic residues" evidence="3">
    <location>
        <begin position="1077"/>
        <end position="1109"/>
    </location>
</feature>
<feature type="modified residue" description="Phosphoserine" evidence="14">
    <location>
        <position position="52"/>
    </location>
</feature>
<feature type="splice variant" id="VSP_027840" description="In isoform 3." evidence="10">
    <original>M</original>
    <variation>MEAGAGAGAGAAGWSCPGPGPTVTTLGSYEASEGCERKKGQRWGSLERRGM</variation>
    <location>
        <position position="1"/>
    </location>
</feature>
<feature type="splice variant" id="VSP_027841" description="In isoform 3." evidence="10">
    <location>
        <begin position="212"/>
        <end position="223"/>
    </location>
</feature>
<feature type="splice variant" id="VSP_027842" description="In isoform 3." evidence="10">
    <location>
        <begin position="364"/>
        <end position="1121"/>
    </location>
</feature>
<feature type="splice variant" id="VSP_027843" description="In isoform 2." evidence="10">
    <original>IKELQTKLRELQLQYQASMDEQGRLLVVQEQLEGQL</original>
    <variation>NMFGLWKPMVFLAIAAVALYVLPNMRQQESEFCLME</variation>
    <location>
        <begin position="922"/>
        <end position="957"/>
    </location>
</feature>
<feature type="splice variant" id="VSP_027844" description="In isoform 2." evidence="10">
    <location>
        <begin position="958"/>
        <end position="1154"/>
    </location>
</feature>
<feature type="splice variant" id="VSP_027845" description="In isoform 4." evidence="11 12">
    <original>SSPTPNPPIFSLPLVGLVVISALLWCWWAETSS</original>
    <variation>NMFGLWKPMVFLAIAAVALYVLPNMRQQESEFCLME</variation>
    <location>
        <begin position="1122"/>
        <end position="1154"/>
    </location>
</feature>
<feature type="sequence variant" id="VAR_034880" description="In dbSNP:rs3816887.">
    <original>D</original>
    <variation>H</variation>
    <location>
        <position position="218"/>
    </location>
</feature>
<feature type="sequence variant" id="VAR_034881" description="In dbSNP:rs4728137." evidence="4 5 7 8 9">
    <original>Q</original>
    <variation>E</variation>
    <location>
        <position position="1049"/>
    </location>
</feature>
<feature type="sequence conflict" description="In Ref. 7; CAB61359." evidence="13" ref="7">
    <original>QR</original>
    <variation>HG</variation>
    <location>
        <begin position="263"/>
        <end position="264"/>
    </location>
</feature>
<feature type="sequence conflict" description="In Ref. 2; BAB14590." evidence="13" ref="2">
    <original>A</original>
    <variation>V</variation>
    <location>
        <position position="490"/>
    </location>
</feature>
<organism>
    <name type="scientific">Homo sapiens</name>
    <name type="common">Human</name>
    <dbReference type="NCBI Taxonomy" id="9606"/>
    <lineage>
        <taxon>Eukaryota</taxon>
        <taxon>Metazoa</taxon>
        <taxon>Chordata</taxon>
        <taxon>Craniata</taxon>
        <taxon>Vertebrata</taxon>
        <taxon>Euteleostomi</taxon>
        <taxon>Mammalia</taxon>
        <taxon>Eutheria</taxon>
        <taxon>Euarchontoglires</taxon>
        <taxon>Primates</taxon>
        <taxon>Haplorrhini</taxon>
        <taxon>Catarrhini</taxon>
        <taxon>Hominidae</taxon>
        <taxon>Homo</taxon>
    </lineage>
</organism>
<comment type="function">
    <text evidence="1">May play a role in acrosome formation in spermatogenesis and in fertilization.</text>
</comment>
<comment type="interaction">
    <interactant intactId="EBI-10171416">
        <id>Q96JN2-2</id>
    </interactant>
    <interactant intactId="EBI-2602396">
        <id>Q9ULW3</id>
        <label>ABT1</label>
    </interactant>
    <organismsDiffer>false</organismsDiffer>
    <experiments>3</experiments>
</comment>
<comment type="interaction">
    <interactant intactId="EBI-10171416">
        <id>Q96JN2-2</id>
    </interactant>
    <interactant intactId="EBI-745213">
        <id>P29972</id>
        <label>AQP1</label>
    </interactant>
    <organismsDiffer>false</organismsDiffer>
    <experiments>3</experiments>
</comment>
<comment type="interaction">
    <interactant intactId="EBI-10171416">
        <id>Q96JN2-2</id>
    </interactant>
    <interactant intactId="EBI-3916346">
        <id>Q9H672</id>
        <label>ASB7</label>
    </interactant>
    <organismsDiffer>false</organismsDiffer>
    <experiments>4</experiments>
</comment>
<comment type="interaction">
    <interactant intactId="EBI-10171416">
        <id>Q96JN2-2</id>
    </interactant>
    <interactant intactId="EBI-355815">
        <id>P48047</id>
        <label>ATP5PO</label>
    </interactant>
    <organismsDiffer>false</organismsDiffer>
    <experiments>3</experiments>
</comment>
<comment type="interaction">
    <interactant intactId="EBI-10171416">
        <id>Q96JN2-2</id>
    </interactant>
    <interactant intactId="EBI-9977322">
        <id>A0AVN2</id>
        <label>BARD1</label>
    </interactant>
    <organismsDiffer>false</organismsDiffer>
    <experiments>3</experiments>
</comment>
<comment type="interaction">
    <interactant intactId="EBI-10171416">
        <id>Q96JN2-2</id>
    </interactant>
    <interactant intactId="EBI-465781">
        <id>Q9UL45</id>
        <label>BLOC1S6</label>
    </interactant>
    <organismsDiffer>false</organismsDiffer>
    <experiments>3</experiments>
</comment>
<comment type="interaction">
    <interactant intactId="EBI-10171416">
        <id>Q96JN2-2</id>
    </interactant>
    <interactant intactId="EBI-358049">
        <id>Q13895</id>
        <label>BYSL</label>
    </interactant>
    <organismsDiffer>false</organismsDiffer>
    <experiments>5</experiments>
</comment>
<comment type="interaction">
    <interactant intactId="EBI-10171416">
        <id>Q96JN2-2</id>
    </interactant>
    <interactant intactId="EBI-747505">
        <id>Q8TAB5</id>
        <label>C1orf216</label>
    </interactant>
    <organismsDiffer>false</organismsDiffer>
    <experiments>3</experiments>
</comment>
<comment type="interaction">
    <interactant intactId="EBI-10171416">
        <id>Q96JN2-2</id>
    </interactant>
    <interactant intactId="EBI-712912">
        <id>Q9HC52</id>
        <label>CBX8</label>
    </interactant>
    <organismsDiffer>false</organismsDiffer>
    <experiments>3</experiments>
</comment>
<comment type="interaction">
    <interactant intactId="EBI-10171416">
        <id>Q96JN2-2</id>
    </interactant>
    <interactant intactId="EBI-10247802">
        <id>Q8IYE0-2</id>
        <label>CCDC146</label>
    </interactant>
    <organismsDiffer>false</organismsDiffer>
    <experiments>3</experiments>
</comment>
<comment type="interaction">
    <interactant intactId="EBI-10171416">
        <id>Q96JN2-2</id>
    </interactant>
    <interactant intactId="EBI-10175300">
        <id>Q8TD31-3</id>
        <label>CCHCR1</label>
    </interactant>
    <organismsDiffer>false</organismsDiffer>
    <experiments>3</experiments>
</comment>
<comment type="interaction">
    <interactant intactId="EBI-10171416">
        <id>Q96JN2-2</id>
    </interactant>
    <interactant intactId="EBI-1052532">
        <id>O14519</id>
        <label>CDK2AP1</label>
    </interactant>
    <organismsDiffer>false</organismsDiffer>
    <experiments>3</experiments>
</comment>
<comment type="interaction">
    <interactant intactId="EBI-10171416">
        <id>Q96JN2-2</id>
    </interactant>
    <interactant intactId="EBI-1104570">
        <id>Q8IYX8</id>
        <label>CEP57L1</label>
    </interactant>
    <organismsDiffer>false</organismsDiffer>
    <experiments>3</experiments>
</comment>
<comment type="interaction">
    <interactant intactId="EBI-10171416">
        <id>Q96JN2-2</id>
    </interactant>
    <interactant intactId="EBI-10181988">
        <id>Q8IYX8-2</id>
        <label>CEP57L1</label>
    </interactant>
    <organismsDiffer>false</organismsDiffer>
    <experiments>3</experiments>
</comment>
<comment type="interaction">
    <interactant intactId="EBI-10171416">
        <id>Q96JN2-2</id>
    </interactant>
    <interactant intactId="EBI-5453285">
        <id>Q2TBE0</id>
        <label>CWF19L2</label>
    </interactant>
    <organismsDiffer>false</organismsDiffer>
    <experiments>3</experiments>
</comment>
<comment type="interaction">
    <interactant intactId="EBI-10171416">
        <id>Q96JN2-2</id>
    </interactant>
    <interactant intactId="EBI-744099">
        <id>Q9H0I2</id>
        <label>ENKD1</label>
    </interactant>
    <organismsDiffer>false</organismsDiffer>
    <experiments>3</experiments>
</comment>
<comment type="interaction">
    <interactant intactId="EBI-10171416">
        <id>Q96JN2-2</id>
    </interactant>
    <interactant intactId="EBI-10192902">
        <id>O95990-3</id>
        <label>FAM107A</label>
    </interactant>
    <organismsDiffer>false</organismsDiffer>
    <experiments>3</experiments>
</comment>
<comment type="interaction">
    <interactant intactId="EBI-10171416">
        <id>Q96JN2-2</id>
    </interactant>
    <interactant intactId="EBI-719941">
        <id>Q3B820</id>
        <label>FAM161A</label>
    </interactant>
    <organismsDiffer>false</organismsDiffer>
    <experiments>3</experiments>
</comment>
<comment type="interaction">
    <interactant intactId="EBI-10171416">
        <id>Q96JN2-2</id>
    </interactant>
    <interactant intactId="EBI-2514791">
        <id>Q96CS2</id>
        <label>HAUS1</label>
    </interactant>
    <organismsDiffer>false</organismsDiffer>
    <experiments>3</experiments>
</comment>
<comment type="interaction">
    <interactant intactId="EBI-10171416">
        <id>Q96JN2-2</id>
    </interactant>
    <interactant intactId="EBI-308629">
        <id>P56524</id>
        <label>HDAC4</label>
    </interactant>
    <organismsDiffer>false</organismsDiffer>
    <experiments>3</experiments>
</comment>
<comment type="interaction">
    <interactant intactId="EBI-10171416">
        <id>Q96JN2-2</id>
    </interactant>
    <interactant intactId="EBI-740641">
        <id>Q9NP66</id>
        <label>HMG20A</label>
    </interactant>
    <organismsDiffer>false</organismsDiffer>
    <experiments>3</experiments>
</comment>
<comment type="interaction">
    <interactant intactId="EBI-10171416">
        <id>Q96JN2-2</id>
    </interactant>
    <interactant intactId="EBI-713401">
        <id>Q9P0W2</id>
        <label>HMG20B</label>
    </interactant>
    <organismsDiffer>false</organismsDiffer>
    <experiments>3</experiments>
</comment>
<comment type="interaction">
    <interactant intactId="EBI-10171416">
        <id>Q96JN2-2</id>
    </interactant>
    <interactant intactId="EBI-10268138">
        <id>Q8N9B5-2</id>
        <label>JMY</label>
    </interactant>
    <organismsDiffer>false</organismsDiffer>
    <experiments>3</experiments>
</comment>
<comment type="interaction">
    <interactant intactId="EBI-10171416">
        <id>Q96JN2-2</id>
    </interactant>
    <interactant intactId="EBI-740244">
        <id>Q7Z3B3</id>
        <label>KANSL1</label>
    </interactant>
    <organismsDiffer>false</organismsDiffer>
    <experiments>3</experiments>
</comment>
<comment type="interaction">
    <interactant intactId="EBI-10171416">
        <id>Q96JN2-2</id>
    </interactant>
    <interactant intactId="EBI-399080">
        <id>Q92993</id>
        <label>KAT5</label>
    </interactant>
    <organismsDiffer>false</organismsDiffer>
    <experiments>3</experiments>
</comment>
<comment type="interaction">
    <interactant intactId="EBI-10171416">
        <id>Q96JN2-2</id>
    </interactant>
    <interactant intactId="EBI-2125614">
        <id>Q9BVG8</id>
        <label>KIFC3</label>
    </interactant>
    <organismsDiffer>false</organismsDiffer>
    <experiments>3</experiments>
</comment>
<comment type="interaction">
    <interactant intactId="EBI-10171416">
        <id>Q96JN2-2</id>
    </interactant>
    <interactant intactId="EBI-726510">
        <id>Q96BZ8</id>
        <label>LENG1</label>
    </interactant>
    <organismsDiffer>false</organismsDiffer>
    <experiments>3</experiments>
</comment>
<comment type="interaction">
    <interactant intactId="EBI-10171416">
        <id>Q96JN2-2</id>
    </interactant>
    <interactant intactId="EBI-751857">
        <id>O15481</id>
        <label>MAGEB4</label>
    </interactant>
    <organismsDiffer>false</organismsDiffer>
    <experiments>3</experiments>
</comment>
<comment type="interaction">
    <interactant intactId="EBI-10171416">
        <id>Q96JN2-2</id>
    </interactant>
    <interactant intactId="EBI-1757866">
        <id>P00540</id>
        <label>MOS</label>
    </interactant>
    <organismsDiffer>false</organismsDiffer>
    <experiments>3</experiments>
</comment>
<comment type="interaction">
    <interactant intactId="EBI-10171416">
        <id>Q96JN2-2</id>
    </interactant>
    <interactant intactId="EBI-751267">
        <id>Q96HC4</id>
        <label>PDLIM5</label>
    </interactant>
    <organismsDiffer>false</organismsDiffer>
    <experiments>3</experiments>
</comment>
<comment type="interaction">
    <interactant intactId="EBI-10171416">
        <id>Q96JN2-2</id>
    </interactant>
    <interactant intactId="EBI-2557469">
        <id>Q6NYC8</id>
        <label>PPP1R18</label>
    </interactant>
    <organismsDiffer>false</organismsDiffer>
    <experiments>3</experiments>
</comment>
<comment type="interaction">
    <interactant intactId="EBI-10171416">
        <id>Q96JN2-2</id>
    </interactant>
    <interactant intactId="EBI-1567797">
        <id>Q8WWY3</id>
        <label>PRPF31</label>
    </interactant>
    <organismsDiffer>false</organismsDiffer>
    <experiments>3</experiments>
</comment>
<comment type="interaction">
    <interactant intactId="EBI-10171416">
        <id>Q96JN2-2</id>
    </interactant>
    <interactant intactId="EBI-750973">
        <id>O00233</id>
        <label>PSMD9</label>
    </interactant>
    <organismsDiffer>false</organismsDiffer>
    <experiments>3</experiments>
</comment>
<comment type="interaction">
    <interactant intactId="EBI-10171416">
        <id>Q96JN2-2</id>
    </interactant>
    <interactant intactId="EBI-744685">
        <id>Q14088</id>
        <label>RAB33A</label>
    </interactant>
    <organismsDiffer>false</organismsDiffer>
    <experiments>3</experiments>
</comment>
<comment type="interaction">
    <interactant intactId="EBI-10171416">
        <id>Q96JN2-2</id>
    </interactant>
    <interactant intactId="EBI-10313866">
        <id>Q9NUL5</id>
        <label>SHFL</label>
    </interactant>
    <organismsDiffer>false</organismsDiffer>
    <experiments>3</experiments>
</comment>
<comment type="interaction">
    <interactant intactId="EBI-10171416">
        <id>Q96JN2-2</id>
    </interactant>
    <interactant intactId="EBI-455078">
        <id>Q969G3</id>
        <label>SMARCE1</label>
    </interactant>
    <organismsDiffer>false</organismsDiffer>
    <experiments>3</experiments>
</comment>
<comment type="interaction">
    <interactant intactId="EBI-10171416">
        <id>Q96JN2-2</id>
    </interactant>
    <interactant intactId="EBI-10223693">
        <id>Q05BL0</id>
        <label>TBRG1</label>
    </interactant>
    <organismsDiffer>false</organismsDiffer>
    <experiments>3</experiments>
</comment>
<comment type="interaction">
    <interactant intactId="EBI-10171416">
        <id>Q96JN2-2</id>
    </interactant>
    <interactant intactId="EBI-710310">
        <id>Q15560</id>
        <label>TCEA2</label>
    </interactant>
    <organismsDiffer>false</organismsDiffer>
    <experiments>3</experiments>
</comment>
<comment type="interaction">
    <interactant intactId="EBI-10171416">
        <id>Q96JN2-2</id>
    </interactant>
    <interactant intactId="EBI-726527">
        <id>P13805</id>
        <label>TNNT1</label>
    </interactant>
    <organismsDiffer>false</organismsDiffer>
    <experiments>3</experiments>
</comment>
<comment type="interaction">
    <interactant intactId="EBI-10171416">
        <id>Q96JN2-2</id>
    </interactant>
    <interactant intactId="EBI-359793">
        <id>P40222</id>
        <label>TXLNA</label>
    </interactant>
    <organismsDiffer>false</organismsDiffer>
    <experiments>5</experiments>
</comment>
<comment type="interaction">
    <interactant intactId="EBI-10171416">
        <id>Q96JN2-2</id>
    </interactant>
    <interactant intactId="EBI-743272">
        <id>O75604</id>
        <label>USP2</label>
    </interactant>
    <organismsDiffer>false</organismsDiffer>
    <experiments>3</experiments>
</comment>
<comment type="interaction">
    <interactant intactId="EBI-10171416">
        <id>Q96JN2-2</id>
    </interactant>
    <interactant intactId="EBI-740767">
        <id>Q53FD0</id>
        <label>ZC2HC1C</label>
    </interactant>
    <organismsDiffer>false</organismsDiffer>
    <experiments>3</experiments>
</comment>
<comment type="interaction">
    <interactant intactId="EBI-10171416">
        <id>Q96JN2-2</id>
    </interactant>
    <interactant intactId="EBI-717634">
        <id>P17024</id>
        <label>ZNF20</label>
    </interactant>
    <organismsDiffer>false</organismsDiffer>
    <experiments>3</experiments>
</comment>
<comment type="interaction">
    <interactant intactId="EBI-10171416">
        <id>Q96JN2-2</id>
    </interactant>
    <interactant intactId="EBI-1105361">
        <id>Q9UIE0</id>
        <label>ZNF230</label>
    </interactant>
    <organismsDiffer>false</organismsDiffer>
    <experiments>3</experiments>
</comment>
<comment type="interaction">
    <interactant intactId="EBI-10171416">
        <id>Q96JN2-2</id>
    </interactant>
    <interactant intactId="EBI-10177272">
        <id>P15622-3</id>
        <label>ZNF250</label>
    </interactant>
    <organismsDiffer>false</organismsDiffer>
    <experiments>3</experiments>
</comment>
<comment type="interaction">
    <interactant intactId="EBI-10171416">
        <id>Q96JN2-2</id>
    </interactant>
    <interactant intactId="EBI-740727">
        <id>Q8TAU3</id>
        <label>ZNF417</label>
    </interactant>
    <organismsDiffer>false</organismsDiffer>
    <experiments>3</experiments>
</comment>
<comment type="interaction">
    <interactant intactId="EBI-10171416">
        <id>Q96JN2-2</id>
    </interactant>
    <interactant intactId="EBI-1105370">
        <id>Q9ULM2</id>
        <label>ZNF490</label>
    </interactant>
    <organismsDiffer>false</organismsDiffer>
    <experiments>3</experiments>
</comment>
<comment type="interaction">
    <interactant intactId="EBI-10171416">
        <id>Q96JN2-2</id>
    </interactant>
    <interactant intactId="EBI-10273713">
        <id>Q8TBZ8</id>
        <label>ZNF564</label>
    </interactant>
    <organismsDiffer>false</organismsDiffer>
    <experiments>3</experiments>
</comment>
<comment type="interaction">
    <interactant intactId="EBI-10171416">
        <id>Q96JN2-2</id>
    </interactant>
    <interactant intactId="EBI-10172590">
        <id>Q7Z3I7</id>
        <label>ZNF572</label>
    </interactant>
    <organismsDiffer>false</organismsDiffer>
    <experiments>6</experiments>
</comment>
<comment type="interaction">
    <interactant intactId="EBI-10171416">
        <id>Q96JN2-2</id>
    </interactant>
    <interactant intactId="EBI-745520">
        <id>Q9P0T4</id>
        <label>ZNF581</label>
    </interactant>
    <organismsDiffer>false</organismsDiffer>
    <experiments>3</experiments>
</comment>
<comment type="interaction">
    <interactant intactId="EBI-10171416">
        <id>Q96JN2-2</id>
    </interactant>
    <interactant intactId="EBI-6427977">
        <id>Q96SQ5</id>
        <label>ZNF587</label>
    </interactant>
    <organismsDiffer>false</organismsDiffer>
    <experiments>3</experiments>
</comment>
<comment type="interaction">
    <interactant intactId="EBI-10171416">
        <id>Q96JN2-2</id>
    </interactant>
    <interactant intactId="EBI-3920053">
        <id>Q16670</id>
        <label>ZSCAN26</label>
    </interactant>
    <organismsDiffer>false</organismsDiffer>
    <experiments>3</experiments>
</comment>
<comment type="interaction">
    <interactant intactId="EBI-10171416">
        <id>Q96JN2-2</id>
    </interactant>
    <interactant intactId="EBI-10307481">
        <id>Q9H6F0</id>
    </interactant>
    <organismsDiffer>false</organismsDiffer>
    <experiments>3</experiments>
</comment>
<comment type="subcellular location">
    <subcellularLocation>
        <location evidence="1">Cytoplasmic vesicle</location>
        <location evidence="1">Secretory vesicle</location>
        <location evidence="1">Acrosome membrane</location>
        <topology evidence="1">Single-pass membrane protein</topology>
    </subcellularLocation>
    <text evidence="1">Exclusively localized on a peripheral part of acrosome membrane (Golgi phase), localized on the equatorial segment of the acrosome (maturation phase).</text>
</comment>
<comment type="alternative products">
    <event type="alternative splicing"/>
    <isoform>
        <id>Q96JN2-1</id>
        <name>1</name>
        <sequence type="displayed"/>
    </isoform>
    <isoform>
        <id>Q96JN2-2</id>
        <name>2</name>
        <sequence type="described" ref="VSP_027843 VSP_027844"/>
    </isoform>
    <isoform>
        <id>Q96JN2-3</id>
        <name>3</name>
        <sequence type="described" ref="VSP_027840 VSP_027841 VSP_027842"/>
    </isoform>
    <isoform>
        <id>Q96JN2-4</id>
        <name>4</name>
        <sequence type="described" ref="VSP_027845"/>
    </isoform>
</comment>
<comment type="tissue specificity">
    <text evidence="6">Expressed in gastric tissues. Down-regulated in gastric cancer.</text>
</comment>
<comment type="miscellaneous">
    <text>Restriction fragment length polymorphisms (RFLPs) in gastric cancer showed loss of 5 kb fragment in comparison with the corresponding normal tissue.</text>
</comment>
<comment type="sequence caution" evidence="13">
    <conflict type="miscellaneous discrepancy">
        <sequence resource="EMBL" id="AF156971"/>
    </conflict>
    <text>Intron retention.</text>
</comment>
<comment type="sequence caution" evidence="13">
    <conflict type="erroneous initiation">
        <sequence resource="EMBL-CDS" id="BAB14590"/>
    </conflict>
    <text>Truncated N-terminus.</text>
</comment>
<comment type="sequence caution" evidence="13">
    <conflict type="erroneous initiation">
        <sequence resource="EMBL-CDS" id="BAB47422"/>
    </conflict>
    <text>Extended N-terminus.</text>
</comment>
<keyword id="KW-0025">Alternative splicing</keyword>
<keyword id="KW-0175">Coiled coil</keyword>
<keyword id="KW-0968">Cytoplasmic vesicle</keyword>
<keyword id="KW-0221">Differentiation</keyword>
<keyword id="KW-0278">Fertilization</keyword>
<keyword id="KW-0472">Membrane</keyword>
<keyword id="KW-0597">Phosphoprotein</keyword>
<keyword id="KW-1267">Proteomics identification</keyword>
<keyword id="KW-1185">Reference proteome</keyword>
<keyword id="KW-0744">Spermatogenesis</keyword>
<keyword id="KW-0812">Transmembrane</keyword>
<keyword id="KW-1133">Transmembrane helix</keyword>